<accession>Q8CMU4</accession>
<name>PHNC_STAES</name>
<reference key="1">
    <citation type="journal article" date="2003" name="Mol. Microbiol.">
        <title>Genome-based analysis of virulence genes in a non-biofilm-forming Staphylococcus epidermidis strain (ATCC 12228).</title>
        <authorList>
            <person name="Zhang Y.-Q."/>
            <person name="Ren S.-X."/>
            <person name="Li H.-L."/>
            <person name="Wang Y.-X."/>
            <person name="Fu G."/>
            <person name="Yang J."/>
            <person name="Qin Z.-Q."/>
            <person name="Miao Y.-G."/>
            <person name="Wang W.-Y."/>
            <person name="Chen R.-S."/>
            <person name="Shen Y."/>
            <person name="Chen Z."/>
            <person name="Yuan Z.-H."/>
            <person name="Zhao G.-P."/>
            <person name="Qu D."/>
            <person name="Danchin A."/>
            <person name="Wen Y.-M."/>
        </authorList>
    </citation>
    <scope>NUCLEOTIDE SEQUENCE [LARGE SCALE GENOMIC DNA]</scope>
    <source>
        <strain>ATCC 12228 / FDA PCI 1200</strain>
    </source>
</reference>
<organism>
    <name type="scientific">Staphylococcus epidermidis (strain ATCC 12228 / FDA PCI 1200)</name>
    <dbReference type="NCBI Taxonomy" id="176280"/>
    <lineage>
        <taxon>Bacteria</taxon>
        <taxon>Bacillati</taxon>
        <taxon>Bacillota</taxon>
        <taxon>Bacilli</taxon>
        <taxon>Bacillales</taxon>
        <taxon>Staphylococcaceae</taxon>
        <taxon>Staphylococcus</taxon>
    </lineage>
</organism>
<gene>
    <name evidence="1" type="primary">phnC</name>
    <name type="ordered locus">SE_2255</name>
</gene>
<dbReference type="EC" id="7.3.2.2" evidence="1"/>
<dbReference type="EMBL" id="AE015929">
    <property type="protein sequence ID" value="AAO05897.1"/>
    <property type="molecule type" value="Genomic_DNA"/>
</dbReference>
<dbReference type="RefSeq" id="NP_765810.1">
    <property type="nucleotide sequence ID" value="NC_004461.1"/>
</dbReference>
<dbReference type="RefSeq" id="WP_001832011.1">
    <property type="nucleotide sequence ID" value="NZ_WBME01000060.1"/>
</dbReference>
<dbReference type="SMR" id="Q8CMU4"/>
<dbReference type="KEGG" id="sep:SE_2255"/>
<dbReference type="PATRIC" id="fig|176280.10.peg.2200"/>
<dbReference type="eggNOG" id="COG3638">
    <property type="taxonomic scope" value="Bacteria"/>
</dbReference>
<dbReference type="HOGENOM" id="CLU_000604_1_22_9"/>
<dbReference type="OrthoDB" id="9802264at2"/>
<dbReference type="Proteomes" id="UP000001411">
    <property type="component" value="Chromosome"/>
</dbReference>
<dbReference type="GO" id="GO:0005886">
    <property type="term" value="C:plasma membrane"/>
    <property type="evidence" value="ECO:0007669"/>
    <property type="project" value="UniProtKB-SubCell"/>
</dbReference>
<dbReference type="GO" id="GO:0015416">
    <property type="term" value="F:ABC-type phosphonate transporter activity"/>
    <property type="evidence" value="ECO:0007669"/>
    <property type="project" value="UniProtKB-EC"/>
</dbReference>
<dbReference type="GO" id="GO:0005524">
    <property type="term" value="F:ATP binding"/>
    <property type="evidence" value="ECO:0007669"/>
    <property type="project" value="UniProtKB-KW"/>
</dbReference>
<dbReference type="GO" id="GO:0016887">
    <property type="term" value="F:ATP hydrolysis activity"/>
    <property type="evidence" value="ECO:0007669"/>
    <property type="project" value="InterPro"/>
</dbReference>
<dbReference type="CDD" id="cd03256">
    <property type="entry name" value="ABC_PhnC_transporter"/>
    <property type="match status" value="1"/>
</dbReference>
<dbReference type="Gene3D" id="3.40.50.300">
    <property type="entry name" value="P-loop containing nucleotide triphosphate hydrolases"/>
    <property type="match status" value="1"/>
</dbReference>
<dbReference type="InterPro" id="IPR003593">
    <property type="entry name" value="AAA+_ATPase"/>
</dbReference>
<dbReference type="InterPro" id="IPR003439">
    <property type="entry name" value="ABC_transporter-like_ATP-bd"/>
</dbReference>
<dbReference type="InterPro" id="IPR017871">
    <property type="entry name" value="ABC_transporter-like_CS"/>
</dbReference>
<dbReference type="InterPro" id="IPR012693">
    <property type="entry name" value="ABC_transpr_PhnC"/>
</dbReference>
<dbReference type="InterPro" id="IPR050086">
    <property type="entry name" value="MetN_ABC_transporter-like"/>
</dbReference>
<dbReference type="InterPro" id="IPR027417">
    <property type="entry name" value="P-loop_NTPase"/>
</dbReference>
<dbReference type="NCBIfam" id="TIGR02315">
    <property type="entry name" value="ABC_phnC"/>
    <property type="match status" value="1"/>
</dbReference>
<dbReference type="PANTHER" id="PTHR43166">
    <property type="entry name" value="AMINO ACID IMPORT ATP-BINDING PROTEIN"/>
    <property type="match status" value="1"/>
</dbReference>
<dbReference type="PANTHER" id="PTHR43166:SF6">
    <property type="entry name" value="PHOSPHONATES IMPORT ATP-BINDING PROTEIN PHNC"/>
    <property type="match status" value="1"/>
</dbReference>
<dbReference type="Pfam" id="PF00005">
    <property type="entry name" value="ABC_tran"/>
    <property type="match status" value="1"/>
</dbReference>
<dbReference type="SMART" id="SM00382">
    <property type="entry name" value="AAA"/>
    <property type="match status" value="1"/>
</dbReference>
<dbReference type="SUPFAM" id="SSF52540">
    <property type="entry name" value="P-loop containing nucleoside triphosphate hydrolases"/>
    <property type="match status" value="1"/>
</dbReference>
<dbReference type="PROSITE" id="PS00211">
    <property type="entry name" value="ABC_TRANSPORTER_1"/>
    <property type="match status" value="1"/>
</dbReference>
<dbReference type="PROSITE" id="PS50893">
    <property type="entry name" value="ABC_TRANSPORTER_2"/>
    <property type="match status" value="1"/>
</dbReference>
<dbReference type="PROSITE" id="PS51249">
    <property type="entry name" value="PHNC"/>
    <property type="match status" value="1"/>
</dbReference>
<evidence type="ECO:0000255" key="1">
    <source>
        <dbReference type="HAMAP-Rule" id="MF_01713"/>
    </source>
</evidence>
<sequence length="257" mass="28650">MSQIEFKDVSKVYPNGHVGLKDINLNIEKGDFAVIVGLSGAGKSTLLRSVNRLHDISKGDITIEGQSITKARGKKLLEMRRSIGMIFQHFNLVKRSTVLRNVLSGRVGYHPTWKMILGLFPKEDKVKALDALERVNILDKYDQRSDQLSGGQQQRISIARALCQEPTIILADEPVASLDPLTTKQVMDDLKKINEELGITILINLHFVDLAKEYGSRIIGLRAGELVYDGPASEANDEVFNHIYGRSIKDDEKLGVE</sequence>
<keyword id="KW-0067">ATP-binding</keyword>
<keyword id="KW-1003">Cell membrane</keyword>
<keyword id="KW-0472">Membrane</keyword>
<keyword id="KW-0547">Nucleotide-binding</keyword>
<keyword id="KW-0918">Phosphonate transport</keyword>
<keyword id="KW-1278">Translocase</keyword>
<keyword id="KW-0813">Transport</keyword>
<feature type="chain" id="PRO_0000092735" description="Phosphonates import ATP-binding protein PhnC">
    <location>
        <begin position="1"/>
        <end position="257"/>
    </location>
</feature>
<feature type="domain" description="ABC transporter" evidence="1">
    <location>
        <begin position="4"/>
        <end position="248"/>
    </location>
</feature>
<feature type="binding site" evidence="1">
    <location>
        <begin position="37"/>
        <end position="44"/>
    </location>
    <ligand>
        <name>ATP</name>
        <dbReference type="ChEBI" id="CHEBI:30616"/>
    </ligand>
</feature>
<comment type="function">
    <text evidence="1">Part of the ABC transporter complex PhnCDE involved in phosphonates import. Responsible for energy coupling to the transport system.</text>
</comment>
<comment type="catalytic activity">
    <reaction evidence="1">
        <text>phosphonate(out) + ATP + H2O = phosphonate(in) + ADP + phosphate + H(+)</text>
        <dbReference type="Rhea" id="RHEA:18065"/>
        <dbReference type="ChEBI" id="CHEBI:15377"/>
        <dbReference type="ChEBI" id="CHEBI:15378"/>
        <dbReference type="ChEBI" id="CHEBI:16215"/>
        <dbReference type="ChEBI" id="CHEBI:30616"/>
        <dbReference type="ChEBI" id="CHEBI:43474"/>
        <dbReference type="ChEBI" id="CHEBI:456216"/>
        <dbReference type="EC" id="7.3.2.2"/>
    </reaction>
</comment>
<comment type="subunit">
    <text evidence="1">The complex is composed of two ATP-binding proteins (PhnC), two transmembrane proteins (PhnE) and a solute-binding protein (PhnD).</text>
</comment>
<comment type="subcellular location">
    <subcellularLocation>
        <location evidence="1">Cell membrane</location>
        <topology evidence="1">Peripheral membrane protein</topology>
    </subcellularLocation>
</comment>
<comment type="similarity">
    <text evidence="1">Belongs to the ABC transporter superfamily. Phosphonates importer (TC 3.A.1.9.1) family.</text>
</comment>
<proteinExistence type="inferred from homology"/>
<protein>
    <recommendedName>
        <fullName evidence="1">Phosphonates import ATP-binding protein PhnC</fullName>
        <ecNumber evidence="1">7.3.2.2</ecNumber>
    </recommendedName>
</protein>